<keyword id="KW-1185">Reference proteome</keyword>
<organism>
    <name type="scientific">Schizosaccharomyces pombe (strain 972 / ATCC 24843)</name>
    <name type="common">Fission yeast</name>
    <dbReference type="NCBI Taxonomy" id="284812"/>
    <lineage>
        <taxon>Eukaryota</taxon>
        <taxon>Fungi</taxon>
        <taxon>Dikarya</taxon>
        <taxon>Ascomycota</taxon>
        <taxon>Taphrinomycotina</taxon>
        <taxon>Schizosaccharomycetes</taxon>
        <taxon>Schizosaccharomycetales</taxon>
        <taxon>Schizosaccharomycetaceae</taxon>
        <taxon>Schizosaccharomyces</taxon>
    </lineage>
</organism>
<reference key="1">
    <citation type="journal article" date="2002" name="Nature">
        <title>The genome sequence of Schizosaccharomyces pombe.</title>
        <authorList>
            <person name="Wood V."/>
            <person name="Gwilliam R."/>
            <person name="Rajandream M.A."/>
            <person name="Lyne M.H."/>
            <person name="Lyne R."/>
            <person name="Stewart A."/>
            <person name="Sgouros J.G."/>
            <person name="Peat N."/>
            <person name="Hayles J."/>
            <person name="Baker S.G."/>
            <person name="Basham D."/>
            <person name="Bowman S."/>
            <person name="Brooks K."/>
            <person name="Brown D."/>
            <person name="Brown S."/>
            <person name="Chillingworth T."/>
            <person name="Churcher C.M."/>
            <person name="Collins M."/>
            <person name="Connor R."/>
            <person name="Cronin A."/>
            <person name="Davis P."/>
            <person name="Feltwell T."/>
            <person name="Fraser A."/>
            <person name="Gentles S."/>
            <person name="Goble A."/>
            <person name="Hamlin N."/>
            <person name="Harris D.E."/>
            <person name="Hidalgo J."/>
            <person name="Hodgson G."/>
            <person name="Holroyd S."/>
            <person name="Hornsby T."/>
            <person name="Howarth S."/>
            <person name="Huckle E.J."/>
            <person name="Hunt S."/>
            <person name="Jagels K."/>
            <person name="James K.D."/>
            <person name="Jones L."/>
            <person name="Jones M."/>
            <person name="Leather S."/>
            <person name="McDonald S."/>
            <person name="McLean J."/>
            <person name="Mooney P."/>
            <person name="Moule S."/>
            <person name="Mungall K.L."/>
            <person name="Murphy L.D."/>
            <person name="Niblett D."/>
            <person name="Odell C."/>
            <person name="Oliver K."/>
            <person name="O'Neil S."/>
            <person name="Pearson D."/>
            <person name="Quail M.A."/>
            <person name="Rabbinowitsch E."/>
            <person name="Rutherford K.M."/>
            <person name="Rutter S."/>
            <person name="Saunders D."/>
            <person name="Seeger K."/>
            <person name="Sharp S."/>
            <person name="Skelton J."/>
            <person name="Simmonds M.N."/>
            <person name="Squares R."/>
            <person name="Squares S."/>
            <person name="Stevens K."/>
            <person name="Taylor K."/>
            <person name="Taylor R.G."/>
            <person name="Tivey A."/>
            <person name="Walsh S.V."/>
            <person name="Warren T."/>
            <person name="Whitehead S."/>
            <person name="Woodward J.R."/>
            <person name="Volckaert G."/>
            <person name="Aert R."/>
            <person name="Robben J."/>
            <person name="Grymonprez B."/>
            <person name="Weltjens I."/>
            <person name="Vanstreels E."/>
            <person name="Rieger M."/>
            <person name="Schaefer M."/>
            <person name="Mueller-Auer S."/>
            <person name="Gabel C."/>
            <person name="Fuchs M."/>
            <person name="Duesterhoeft A."/>
            <person name="Fritzc C."/>
            <person name="Holzer E."/>
            <person name="Moestl D."/>
            <person name="Hilbert H."/>
            <person name="Borzym K."/>
            <person name="Langer I."/>
            <person name="Beck A."/>
            <person name="Lehrach H."/>
            <person name="Reinhardt R."/>
            <person name="Pohl T.M."/>
            <person name="Eger P."/>
            <person name="Zimmermann W."/>
            <person name="Wedler H."/>
            <person name="Wambutt R."/>
            <person name="Purnelle B."/>
            <person name="Goffeau A."/>
            <person name="Cadieu E."/>
            <person name="Dreano S."/>
            <person name="Gloux S."/>
            <person name="Lelaure V."/>
            <person name="Mottier S."/>
            <person name="Galibert F."/>
            <person name="Aves S.J."/>
            <person name="Xiang Z."/>
            <person name="Hunt C."/>
            <person name="Moore K."/>
            <person name="Hurst S.M."/>
            <person name="Lucas M."/>
            <person name="Rochet M."/>
            <person name="Gaillardin C."/>
            <person name="Tallada V.A."/>
            <person name="Garzon A."/>
            <person name="Thode G."/>
            <person name="Daga R.R."/>
            <person name="Cruzado L."/>
            <person name="Jimenez J."/>
            <person name="Sanchez M."/>
            <person name="del Rey F."/>
            <person name="Benito J."/>
            <person name="Dominguez A."/>
            <person name="Revuelta J.L."/>
            <person name="Moreno S."/>
            <person name="Armstrong J."/>
            <person name="Forsburg S.L."/>
            <person name="Cerutti L."/>
            <person name="Lowe T."/>
            <person name="McCombie W.R."/>
            <person name="Paulsen I."/>
            <person name="Potashkin J."/>
            <person name="Shpakovski G.V."/>
            <person name="Ussery D."/>
            <person name="Barrell B.G."/>
            <person name="Nurse P."/>
        </authorList>
    </citation>
    <scope>NUCLEOTIDE SEQUENCE [LARGE SCALE GENOMIC DNA]</scope>
    <source>
        <strain>972 / ATCC 24843</strain>
    </source>
</reference>
<evidence type="ECO:0000256" key="1">
    <source>
        <dbReference type="SAM" id="MobiDB-lite"/>
    </source>
</evidence>
<name>YDA5_SCHPO</name>
<feature type="chain" id="PRO_0000116602" description="Uncharacterized protein C1F12.05">
    <location>
        <begin position="1"/>
        <end position="377"/>
    </location>
</feature>
<feature type="region of interest" description="Disordered" evidence="1">
    <location>
        <begin position="345"/>
        <end position="377"/>
    </location>
</feature>
<gene>
    <name type="ORF">SPAC1F12.05</name>
</gene>
<accession>Q10347</accession>
<sequence length="377" mass="42376">MPSLVRRFQHASTEEQPFELNIQMESPPLVMYGNPDVSSGALASGLAKLTVFPADLKCESIVMEFVRIISTKRPLRDSCPDCKAQVEAFEKWEFSKEPTVYTHGTHTWPFTFIIPGHFPQTTNSPFINVTYILKTRVKIPSQPDFVFEYPLNLKRSIVTNADKIAQRLFPPTSLIALLELPPVIHPLSCVPVEFQLTGVKPENSKVGWRLTKISWRIEEQIKAQINGCSTHTGTKKPYIFKETRLLGNNEHKSGWKEDGDRIIFEIPISTSLLSKPICDVSFDGQFSLYIAHQLILETIVVEVMNSHPINSNARILRMKVNLPLTERGGLGVSWDEECPPMFNSVGPSPPAYEQVARSSPTDIPLPPPSCPTNVQRD</sequence>
<protein>
    <recommendedName>
        <fullName>Uncharacterized protein C1F12.05</fullName>
    </recommendedName>
</protein>
<proteinExistence type="predicted"/>
<dbReference type="EMBL" id="CU329670">
    <property type="protein sequence ID" value="CAA93809.1"/>
    <property type="molecule type" value="Genomic_DNA"/>
</dbReference>
<dbReference type="PIR" id="S67448">
    <property type="entry name" value="S67448"/>
</dbReference>
<dbReference type="BioGRID" id="278729">
    <property type="interactions" value="18"/>
</dbReference>
<dbReference type="FunCoup" id="Q10347">
    <property type="interactions" value="310"/>
</dbReference>
<dbReference type="STRING" id="284812.Q10347"/>
<dbReference type="iPTMnet" id="Q10347"/>
<dbReference type="PaxDb" id="4896-SPAC1F12.05.1"/>
<dbReference type="EnsemblFungi" id="SPAC1F12.05.1">
    <property type="protein sequence ID" value="SPAC1F12.05.1:pep"/>
    <property type="gene ID" value="SPAC1F12.05"/>
</dbReference>
<dbReference type="KEGG" id="spo:2542260"/>
<dbReference type="PomBase" id="SPAC1F12.05"/>
<dbReference type="VEuPathDB" id="FungiDB:SPAC1F12.05"/>
<dbReference type="eggNOG" id="ENOG502QS9U">
    <property type="taxonomic scope" value="Eukaryota"/>
</dbReference>
<dbReference type="HOGENOM" id="CLU_026015_1_0_1"/>
<dbReference type="InParanoid" id="Q10347"/>
<dbReference type="OMA" id="VSWDEEC"/>
<dbReference type="PhylomeDB" id="Q10347"/>
<dbReference type="Reactome" id="R-SPO-844456">
    <property type="pathway name" value="The NLRP3 inflammasome"/>
</dbReference>
<dbReference type="PRO" id="PR:Q10347"/>
<dbReference type="Proteomes" id="UP000002485">
    <property type="component" value="Chromosome I"/>
</dbReference>
<dbReference type="GO" id="GO:0030136">
    <property type="term" value="C:clathrin-coated vesicle"/>
    <property type="evidence" value="ECO:0000266"/>
    <property type="project" value="PomBase"/>
</dbReference>
<dbReference type="GO" id="GO:0005737">
    <property type="term" value="C:cytoplasm"/>
    <property type="evidence" value="ECO:0000318"/>
    <property type="project" value="GO_Central"/>
</dbReference>
<dbReference type="GO" id="GO:0005829">
    <property type="term" value="C:cytosol"/>
    <property type="evidence" value="ECO:0007005"/>
    <property type="project" value="PomBase"/>
</dbReference>
<dbReference type="GO" id="GO:0005634">
    <property type="term" value="C:nucleus"/>
    <property type="evidence" value="ECO:0007005"/>
    <property type="project" value="PomBase"/>
</dbReference>
<dbReference type="GO" id="GO:0030674">
    <property type="term" value="F:protein-macromolecule adaptor activity"/>
    <property type="evidence" value="ECO:0000318"/>
    <property type="project" value="GO_Central"/>
</dbReference>
<dbReference type="GO" id="GO:0031625">
    <property type="term" value="F:ubiquitin protein ligase binding"/>
    <property type="evidence" value="ECO:0000318"/>
    <property type="project" value="GO_Central"/>
</dbReference>
<dbReference type="GO" id="GO:0072583">
    <property type="term" value="P:clathrin-dependent endocytosis"/>
    <property type="evidence" value="ECO:0000266"/>
    <property type="project" value="PomBase"/>
</dbReference>
<dbReference type="GO" id="GO:0070086">
    <property type="term" value="P:ubiquitin-dependent endocytosis"/>
    <property type="evidence" value="ECO:0000318"/>
    <property type="project" value="GO_Central"/>
</dbReference>
<dbReference type="FunFam" id="2.60.40.640:FF:000063">
    <property type="entry name" value="Arrestin"/>
    <property type="match status" value="1"/>
</dbReference>
<dbReference type="Gene3D" id="2.60.40.640">
    <property type="match status" value="1"/>
</dbReference>
<dbReference type="InterPro" id="IPR014752">
    <property type="entry name" value="Arrestin-like_C"/>
</dbReference>
<dbReference type="InterPro" id="IPR014756">
    <property type="entry name" value="Ig_E-set"/>
</dbReference>
<dbReference type="InterPro" id="IPR024391">
    <property type="entry name" value="LDB19_N"/>
</dbReference>
<dbReference type="Pfam" id="PF13002">
    <property type="entry name" value="LDB19"/>
    <property type="match status" value="1"/>
</dbReference>
<dbReference type="SUPFAM" id="SSF81296">
    <property type="entry name" value="E set domains"/>
    <property type="match status" value="1"/>
</dbReference>